<gene>
    <name evidence="1" type="primary">rplI</name>
    <name type="ordered locus">Rmag_0666</name>
</gene>
<name>RL9_RUTMC</name>
<dbReference type="EMBL" id="CP000488">
    <property type="protein sequence ID" value="ABL02408.1"/>
    <property type="molecule type" value="Genomic_DNA"/>
</dbReference>
<dbReference type="RefSeq" id="WP_011738033.1">
    <property type="nucleotide sequence ID" value="NC_008610.1"/>
</dbReference>
<dbReference type="SMR" id="A1AWV1"/>
<dbReference type="STRING" id="413404.Rmag_0666"/>
<dbReference type="KEGG" id="rma:Rmag_0666"/>
<dbReference type="eggNOG" id="COG0359">
    <property type="taxonomic scope" value="Bacteria"/>
</dbReference>
<dbReference type="HOGENOM" id="CLU_078938_4_1_6"/>
<dbReference type="OrthoDB" id="9788336at2"/>
<dbReference type="Proteomes" id="UP000002587">
    <property type="component" value="Chromosome"/>
</dbReference>
<dbReference type="GO" id="GO:1990904">
    <property type="term" value="C:ribonucleoprotein complex"/>
    <property type="evidence" value="ECO:0007669"/>
    <property type="project" value="UniProtKB-KW"/>
</dbReference>
<dbReference type="GO" id="GO:0005840">
    <property type="term" value="C:ribosome"/>
    <property type="evidence" value="ECO:0007669"/>
    <property type="project" value="UniProtKB-KW"/>
</dbReference>
<dbReference type="GO" id="GO:0019843">
    <property type="term" value="F:rRNA binding"/>
    <property type="evidence" value="ECO:0007669"/>
    <property type="project" value="UniProtKB-UniRule"/>
</dbReference>
<dbReference type="GO" id="GO:0003735">
    <property type="term" value="F:structural constituent of ribosome"/>
    <property type="evidence" value="ECO:0007669"/>
    <property type="project" value="InterPro"/>
</dbReference>
<dbReference type="GO" id="GO:0006412">
    <property type="term" value="P:translation"/>
    <property type="evidence" value="ECO:0007669"/>
    <property type="project" value="UniProtKB-UniRule"/>
</dbReference>
<dbReference type="Gene3D" id="3.10.430.100">
    <property type="entry name" value="Ribosomal protein L9, C-terminal domain"/>
    <property type="match status" value="1"/>
</dbReference>
<dbReference type="Gene3D" id="3.40.5.10">
    <property type="entry name" value="Ribosomal protein L9, N-terminal domain"/>
    <property type="match status" value="1"/>
</dbReference>
<dbReference type="HAMAP" id="MF_00503">
    <property type="entry name" value="Ribosomal_bL9"/>
    <property type="match status" value="1"/>
</dbReference>
<dbReference type="InterPro" id="IPR000244">
    <property type="entry name" value="Ribosomal_bL9"/>
</dbReference>
<dbReference type="InterPro" id="IPR009027">
    <property type="entry name" value="Ribosomal_bL9/RNase_H1_N"/>
</dbReference>
<dbReference type="InterPro" id="IPR020594">
    <property type="entry name" value="Ribosomal_bL9_bac/chp"/>
</dbReference>
<dbReference type="InterPro" id="IPR020069">
    <property type="entry name" value="Ribosomal_bL9_C"/>
</dbReference>
<dbReference type="InterPro" id="IPR036791">
    <property type="entry name" value="Ribosomal_bL9_C_sf"/>
</dbReference>
<dbReference type="InterPro" id="IPR020070">
    <property type="entry name" value="Ribosomal_bL9_N"/>
</dbReference>
<dbReference type="InterPro" id="IPR036935">
    <property type="entry name" value="Ribosomal_bL9_N_sf"/>
</dbReference>
<dbReference type="NCBIfam" id="TIGR00158">
    <property type="entry name" value="L9"/>
    <property type="match status" value="1"/>
</dbReference>
<dbReference type="PANTHER" id="PTHR21368">
    <property type="entry name" value="50S RIBOSOMAL PROTEIN L9"/>
    <property type="match status" value="1"/>
</dbReference>
<dbReference type="Pfam" id="PF03948">
    <property type="entry name" value="Ribosomal_L9_C"/>
    <property type="match status" value="1"/>
</dbReference>
<dbReference type="Pfam" id="PF01281">
    <property type="entry name" value="Ribosomal_L9_N"/>
    <property type="match status" value="1"/>
</dbReference>
<dbReference type="SUPFAM" id="SSF55658">
    <property type="entry name" value="L9 N-domain-like"/>
    <property type="match status" value="1"/>
</dbReference>
<dbReference type="SUPFAM" id="SSF55653">
    <property type="entry name" value="Ribosomal protein L9 C-domain"/>
    <property type="match status" value="1"/>
</dbReference>
<accession>A1AWV1</accession>
<comment type="function">
    <text evidence="1">Binds to the 23S rRNA.</text>
</comment>
<comment type="similarity">
    <text evidence="1">Belongs to the bacterial ribosomal protein bL9 family.</text>
</comment>
<sequence>MQVILLEKIQKLGDLGDLANVKAGYARNFLIPRSKVKPATKTNLAKFKLIKAELQASEAKILKNAQVIESKMTGTVCTIQANAGEEGKLFGSINTSDIQISLAASGFEVEKRNINMPETIHHTGKYEISVDLHTDITVSIKVVIEGFQEA</sequence>
<keyword id="KW-0687">Ribonucleoprotein</keyword>
<keyword id="KW-0689">Ribosomal protein</keyword>
<keyword id="KW-0694">RNA-binding</keyword>
<keyword id="KW-0699">rRNA-binding</keyword>
<organism>
    <name type="scientific">Ruthia magnifica subsp. Calyptogena magnifica</name>
    <dbReference type="NCBI Taxonomy" id="413404"/>
    <lineage>
        <taxon>Bacteria</taxon>
        <taxon>Pseudomonadati</taxon>
        <taxon>Pseudomonadota</taxon>
        <taxon>Gammaproteobacteria</taxon>
        <taxon>Candidatus Pseudothioglobaceae</taxon>
        <taxon>Candidatus Ruthturnera</taxon>
    </lineage>
</organism>
<proteinExistence type="inferred from homology"/>
<protein>
    <recommendedName>
        <fullName evidence="1">Large ribosomal subunit protein bL9</fullName>
    </recommendedName>
    <alternativeName>
        <fullName evidence="2">50S ribosomal protein L9</fullName>
    </alternativeName>
</protein>
<evidence type="ECO:0000255" key="1">
    <source>
        <dbReference type="HAMAP-Rule" id="MF_00503"/>
    </source>
</evidence>
<evidence type="ECO:0000305" key="2"/>
<reference key="1">
    <citation type="journal article" date="2007" name="Science">
        <title>The Calyptogena magnifica chemoautotrophic symbiont genome.</title>
        <authorList>
            <person name="Newton I.L.G."/>
            <person name="Woyke T."/>
            <person name="Auchtung T.A."/>
            <person name="Dilly G.F."/>
            <person name="Dutton R.J."/>
            <person name="Fisher M.C."/>
            <person name="Fontanez K.M."/>
            <person name="Lau E."/>
            <person name="Stewart F.J."/>
            <person name="Richardson P.M."/>
            <person name="Barry K.W."/>
            <person name="Saunders E."/>
            <person name="Detter J.C."/>
            <person name="Wu D."/>
            <person name="Eisen J.A."/>
            <person name="Cavanaugh C.M."/>
        </authorList>
    </citation>
    <scope>NUCLEOTIDE SEQUENCE [LARGE SCALE GENOMIC DNA]</scope>
</reference>
<feature type="chain" id="PRO_1000014852" description="Large ribosomal subunit protein bL9">
    <location>
        <begin position="1"/>
        <end position="150"/>
    </location>
</feature>